<feature type="chain" id="PRO_1000145575" description="Glutathione-regulated potassium-efflux system ancillary protein KefG">
    <location>
        <begin position="1"/>
        <end position="184"/>
    </location>
</feature>
<gene>
    <name evidence="1" type="primary">kefG</name>
    <name type="ordered locus">ECDH10B_3527</name>
</gene>
<reference key="1">
    <citation type="journal article" date="2008" name="J. Bacteriol.">
        <title>The complete genome sequence of Escherichia coli DH10B: insights into the biology of a laboratory workhorse.</title>
        <authorList>
            <person name="Durfee T."/>
            <person name="Nelson R."/>
            <person name="Baldwin S."/>
            <person name="Plunkett G. III"/>
            <person name="Burland V."/>
            <person name="Mau B."/>
            <person name="Petrosino J.F."/>
            <person name="Qin X."/>
            <person name="Muzny D.M."/>
            <person name="Ayele M."/>
            <person name="Gibbs R.A."/>
            <person name="Csorgo B."/>
            <person name="Posfai G."/>
            <person name="Weinstock G.M."/>
            <person name="Blattner F.R."/>
        </authorList>
    </citation>
    <scope>NUCLEOTIDE SEQUENCE [LARGE SCALE GENOMIC DNA]</scope>
    <source>
        <strain>K12 / DH10B</strain>
    </source>
</reference>
<name>KEFG_ECODH</name>
<dbReference type="EC" id="1.6.5.2" evidence="1"/>
<dbReference type="EMBL" id="CP000948">
    <property type="protein sequence ID" value="ACB04411.1"/>
    <property type="molecule type" value="Genomic_DNA"/>
</dbReference>
<dbReference type="SMR" id="B1X6K1"/>
<dbReference type="KEGG" id="ecd:ECDH10B_3527"/>
<dbReference type="HOGENOM" id="CLU_058643_0_1_6"/>
<dbReference type="GO" id="GO:0005886">
    <property type="term" value="C:plasma membrane"/>
    <property type="evidence" value="ECO:0007669"/>
    <property type="project" value="UniProtKB-SubCell"/>
</dbReference>
<dbReference type="GO" id="GO:0009055">
    <property type="term" value="F:electron transfer activity"/>
    <property type="evidence" value="ECO:0007669"/>
    <property type="project" value="TreeGrafter"/>
</dbReference>
<dbReference type="GO" id="GO:0010181">
    <property type="term" value="F:FMN binding"/>
    <property type="evidence" value="ECO:0007669"/>
    <property type="project" value="TreeGrafter"/>
</dbReference>
<dbReference type="GO" id="GO:0050136">
    <property type="term" value="F:NADH:ubiquinone reductase (non-electrogenic) activity"/>
    <property type="evidence" value="ECO:0007669"/>
    <property type="project" value="RHEA"/>
</dbReference>
<dbReference type="GO" id="GO:0008753">
    <property type="term" value="F:NADPH dehydrogenase (quinone) activity"/>
    <property type="evidence" value="ECO:0007669"/>
    <property type="project" value="RHEA"/>
</dbReference>
<dbReference type="GO" id="GO:1901381">
    <property type="term" value="P:positive regulation of potassium ion transmembrane transport"/>
    <property type="evidence" value="ECO:0007669"/>
    <property type="project" value="UniProtKB-UniRule"/>
</dbReference>
<dbReference type="GO" id="GO:0006813">
    <property type="term" value="P:potassium ion transport"/>
    <property type="evidence" value="ECO:0007669"/>
    <property type="project" value="InterPro"/>
</dbReference>
<dbReference type="FunFam" id="3.40.50.360:FF:000013">
    <property type="entry name" value="Glutathione-regulated potassium-efflux system ancillary protein KefG"/>
    <property type="match status" value="1"/>
</dbReference>
<dbReference type="Gene3D" id="3.40.50.360">
    <property type="match status" value="1"/>
</dbReference>
<dbReference type="HAMAP" id="MF_01415">
    <property type="entry name" value="K_H_efflux_KefG"/>
    <property type="match status" value="1"/>
</dbReference>
<dbReference type="InterPro" id="IPR003680">
    <property type="entry name" value="Flavodoxin_fold"/>
</dbReference>
<dbReference type="InterPro" id="IPR029039">
    <property type="entry name" value="Flavoprotein-like_sf"/>
</dbReference>
<dbReference type="InterPro" id="IPR023947">
    <property type="entry name" value="K_H_efflux_KefG"/>
</dbReference>
<dbReference type="InterPro" id="IPR046980">
    <property type="entry name" value="KefG/KefF"/>
</dbReference>
<dbReference type="NCBIfam" id="NF003430">
    <property type="entry name" value="PRK04930.1"/>
    <property type="match status" value="1"/>
</dbReference>
<dbReference type="PANTHER" id="PTHR47307">
    <property type="entry name" value="GLUTATHIONE-REGULATED POTASSIUM-EFFLUX SYSTEM ANCILLARY PROTEIN KEFG"/>
    <property type="match status" value="1"/>
</dbReference>
<dbReference type="PANTHER" id="PTHR47307:SF1">
    <property type="entry name" value="GLUTATHIONE-REGULATED POTASSIUM-EFFLUX SYSTEM ANCILLARY PROTEIN KEFG"/>
    <property type="match status" value="1"/>
</dbReference>
<dbReference type="Pfam" id="PF02525">
    <property type="entry name" value="Flavodoxin_2"/>
    <property type="match status" value="1"/>
</dbReference>
<dbReference type="SUPFAM" id="SSF52218">
    <property type="entry name" value="Flavoproteins"/>
    <property type="match status" value="1"/>
</dbReference>
<organism>
    <name type="scientific">Escherichia coli (strain K12 / DH10B)</name>
    <dbReference type="NCBI Taxonomy" id="316385"/>
    <lineage>
        <taxon>Bacteria</taxon>
        <taxon>Pseudomonadati</taxon>
        <taxon>Pseudomonadota</taxon>
        <taxon>Gammaproteobacteria</taxon>
        <taxon>Enterobacterales</taxon>
        <taxon>Enterobacteriaceae</taxon>
        <taxon>Escherichia</taxon>
    </lineage>
</organism>
<keyword id="KW-0997">Cell inner membrane</keyword>
<keyword id="KW-1003">Cell membrane</keyword>
<keyword id="KW-0472">Membrane</keyword>
<keyword id="KW-0520">NAD</keyword>
<keyword id="KW-0560">Oxidoreductase</keyword>
<accession>B1X6K1</accession>
<sequence>MMSQPAKVLLLYAHPESQDSVANRVLLKPATQLSNVTVHDLYAHYPDFFIDIPREQALLREHEVIVFQHPLYTYSCPALLKEWLDRVLSRGFASGPGGNQLAGKYWRSVITTGEPESAYRYDALNRYPMSDVLRPFELAAGMCRMHWLSPIIIYWARRQSAQELASHARAYGDWLANPLSPGGR</sequence>
<proteinExistence type="inferred from homology"/>
<comment type="function">
    <text evidence="1">Regulatory subunit of a potassium efflux system that confers protection against electrophiles. Required for full activity of KefB.</text>
</comment>
<comment type="catalytic activity">
    <reaction evidence="1">
        <text>a quinone + NADH + H(+) = a quinol + NAD(+)</text>
        <dbReference type="Rhea" id="RHEA:46160"/>
        <dbReference type="ChEBI" id="CHEBI:15378"/>
        <dbReference type="ChEBI" id="CHEBI:24646"/>
        <dbReference type="ChEBI" id="CHEBI:57540"/>
        <dbReference type="ChEBI" id="CHEBI:57945"/>
        <dbReference type="ChEBI" id="CHEBI:132124"/>
        <dbReference type="EC" id="1.6.5.2"/>
    </reaction>
</comment>
<comment type="catalytic activity">
    <reaction evidence="1">
        <text>a quinone + NADPH + H(+) = a quinol + NADP(+)</text>
        <dbReference type="Rhea" id="RHEA:46164"/>
        <dbReference type="ChEBI" id="CHEBI:15378"/>
        <dbReference type="ChEBI" id="CHEBI:24646"/>
        <dbReference type="ChEBI" id="CHEBI:57783"/>
        <dbReference type="ChEBI" id="CHEBI:58349"/>
        <dbReference type="ChEBI" id="CHEBI:132124"/>
        <dbReference type="EC" id="1.6.5.2"/>
    </reaction>
</comment>
<comment type="subunit">
    <text evidence="1">Interacts with KefB.</text>
</comment>
<comment type="subcellular location">
    <subcellularLocation>
        <location evidence="1">Cell inner membrane</location>
        <topology evidence="1">Peripheral membrane protein</topology>
        <orientation evidence="1">Cytoplasmic side</orientation>
    </subcellularLocation>
</comment>
<comment type="similarity">
    <text evidence="1">Belongs to the NAD(P)H dehydrogenase (quinone) family. KefG subfamily.</text>
</comment>
<evidence type="ECO:0000255" key="1">
    <source>
        <dbReference type="HAMAP-Rule" id="MF_01415"/>
    </source>
</evidence>
<protein>
    <recommendedName>
        <fullName evidence="1">Glutathione-regulated potassium-efflux system ancillary protein KefG</fullName>
    </recommendedName>
    <alternativeName>
        <fullName evidence="1">Putative quinone oxidoreductase KefG</fullName>
        <ecNumber evidence="1">1.6.5.2</ecNumber>
    </alternativeName>
</protein>